<feature type="chain" id="PRO_0000073289" description="ATP synthase gamma chain">
    <location>
        <begin position="1"/>
        <end position="314"/>
    </location>
</feature>
<sequence>MPNLRGIRDRIKSVKNTQKITKAMRLVAAARVRRAQEQVLAGRPFADRLVGLLFRLRSRLRFEDVQSPLMERRDVQKVLVLVIAGDRGLCGAYNSNIIRRTVQYLRELQQQGKQFALYLVGNKAISFFRRSNFPIAKTLTNVDPNTPLEGANQLITDDILAPFLSGEYDQVELVYTRFVSLISSRPTVQTLLPLDPDALGQEDETFKLITKGGGFEVLREKQQVRTEPEFAADTIFEQDPTQLLDALLPLYLTSEVLHALQESSASELAARMTAMSAASDNAKKLLSTLTIVYNKARQASITQEILEVVSGANA</sequence>
<protein>
    <recommendedName>
        <fullName evidence="1">ATP synthase gamma chain</fullName>
    </recommendedName>
    <alternativeName>
        <fullName evidence="1">ATP synthase F1 sector gamma subunit</fullName>
    </alternativeName>
    <alternativeName>
        <fullName evidence="1">F-ATPase gamma subunit</fullName>
    </alternativeName>
</protein>
<comment type="function">
    <text evidence="1">Produces ATP from ADP in the presence of a proton gradient across the membrane. The gamma chain is believed to be important in regulating ATPase activity and the flow of protons through the CF(0) complex.</text>
</comment>
<comment type="subunit">
    <text evidence="1">F-type ATPases have 2 components, CF(1) - the catalytic core - and CF(0) - the membrane proton channel. CF(1) has five subunits: alpha(3), beta(3), gamma(1), delta(1), epsilon(1). CF(0) has three main subunits: a, b and c.</text>
</comment>
<comment type="subcellular location">
    <subcellularLocation>
        <location evidence="1">Cell inner membrane</location>
        <topology evidence="1">Peripheral membrane protein</topology>
    </subcellularLocation>
</comment>
<comment type="similarity">
    <text evidence="1">Belongs to the ATPase gamma chain family.</text>
</comment>
<evidence type="ECO:0000255" key="1">
    <source>
        <dbReference type="HAMAP-Rule" id="MF_00815"/>
    </source>
</evidence>
<proteinExistence type="inferred from homology"/>
<organism>
    <name type="scientific">Gloeobacter violaceus (strain ATCC 29082 / PCC 7421)</name>
    <dbReference type="NCBI Taxonomy" id="251221"/>
    <lineage>
        <taxon>Bacteria</taxon>
        <taxon>Bacillati</taxon>
        <taxon>Cyanobacteriota</taxon>
        <taxon>Cyanophyceae</taxon>
        <taxon>Gloeobacterales</taxon>
        <taxon>Gloeobacteraceae</taxon>
        <taxon>Gloeobacter</taxon>
    </lineage>
</organism>
<keyword id="KW-0066">ATP synthesis</keyword>
<keyword id="KW-0997">Cell inner membrane</keyword>
<keyword id="KW-1003">Cell membrane</keyword>
<keyword id="KW-0139">CF(1)</keyword>
<keyword id="KW-0375">Hydrogen ion transport</keyword>
<keyword id="KW-0406">Ion transport</keyword>
<keyword id="KW-0472">Membrane</keyword>
<keyword id="KW-1185">Reference proteome</keyword>
<keyword id="KW-0813">Transport</keyword>
<dbReference type="EMBL" id="BA000045">
    <property type="protein sequence ID" value="BAC92256.1"/>
    <property type="molecule type" value="Genomic_DNA"/>
</dbReference>
<dbReference type="RefSeq" id="NP_927261.1">
    <property type="nucleotide sequence ID" value="NC_005125.1"/>
</dbReference>
<dbReference type="RefSeq" id="WP_011144299.1">
    <property type="nucleotide sequence ID" value="NC_005125.1"/>
</dbReference>
<dbReference type="SMR" id="Q7NDC0"/>
<dbReference type="FunCoup" id="Q7NDC0">
    <property type="interactions" value="364"/>
</dbReference>
<dbReference type="STRING" id="251221.gene:10761834"/>
<dbReference type="EnsemblBacteria" id="BAC92256">
    <property type="protein sequence ID" value="BAC92256"/>
    <property type="gene ID" value="BAC92256"/>
</dbReference>
<dbReference type="KEGG" id="gvi:glr4315"/>
<dbReference type="PATRIC" id="fig|251221.4.peg.4344"/>
<dbReference type="eggNOG" id="COG0224">
    <property type="taxonomic scope" value="Bacteria"/>
</dbReference>
<dbReference type="HOGENOM" id="CLU_050669_0_0_3"/>
<dbReference type="InParanoid" id="Q7NDC0"/>
<dbReference type="OrthoDB" id="9812769at2"/>
<dbReference type="PhylomeDB" id="Q7NDC0"/>
<dbReference type="Proteomes" id="UP000000557">
    <property type="component" value="Chromosome"/>
</dbReference>
<dbReference type="GO" id="GO:0005886">
    <property type="term" value="C:plasma membrane"/>
    <property type="evidence" value="ECO:0007669"/>
    <property type="project" value="UniProtKB-SubCell"/>
</dbReference>
<dbReference type="GO" id="GO:0045259">
    <property type="term" value="C:proton-transporting ATP synthase complex"/>
    <property type="evidence" value="ECO:0007669"/>
    <property type="project" value="UniProtKB-KW"/>
</dbReference>
<dbReference type="GO" id="GO:0005524">
    <property type="term" value="F:ATP binding"/>
    <property type="evidence" value="ECO:0007669"/>
    <property type="project" value="UniProtKB-UniRule"/>
</dbReference>
<dbReference type="GO" id="GO:0046933">
    <property type="term" value="F:proton-transporting ATP synthase activity, rotational mechanism"/>
    <property type="evidence" value="ECO:0007669"/>
    <property type="project" value="UniProtKB-UniRule"/>
</dbReference>
<dbReference type="GO" id="GO:0015986">
    <property type="term" value="P:proton motive force-driven ATP synthesis"/>
    <property type="evidence" value="ECO:0000318"/>
    <property type="project" value="GO_Central"/>
</dbReference>
<dbReference type="GO" id="GO:0042777">
    <property type="term" value="P:proton motive force-driven plasma membrane ATP synthesis"/>
    <property type="evidence" value="ECO:0007669"/>
    <property type="project" value="UniProtKB-UniRule"/>
</dbReference>
<dbReference type="CDD" id="cd12151">
    <property type="entry name" value="F1-ATPase_gamma"/>
    <property type="match status" value="1"/>
</dbReference>
<dbReference type="FunFam" id="3.40.1380.10:FF:000006">
    <property type="entry name" value="ATP synthase gamma chain"/>
    <property type="match status" value="1"/>
</dbReference>
<dbReference type="FunFam" id="1.10.287.80:FF:000003">
    <property type="entry name" value="ATP synthase gamma chain, chloroplastic"/>
    <property type="match status" value="1"/>
</dbReference>
<dbReference type="FunFam" id="1.10.287.80:FF:000004">
    <property type="entry name" value="ATP synthase gamma chain, chloroplastic"/>
    <property type="match status" value="1"/>
</dbReference>
<dbReference type="Gene3D" id="3.40.1380.10">
    <property type="match status" value="1"/>
</dbReference>
<dbReference type="Gene3D" id="1.10.287.80">
    <property type="entry name" value="ATP synthase, gamma subunit, helix hairpin domain"/>
    <property type="match status" value="2"/>
</dbReference>
<dbReference type="HAMAP" id="MF_00815">
    <property type="entry name" value="ATP_synth_gamma_bact"/>
    <property type="match status" value="1"/>
</dbReference>
<dbReference type="InterPro" id="IPR035968">
    <property type="entry name" value="ATP_synth_F1_ATPase_gsu"/>
</dbReference>
<dbReference type="InterPro" id="IPR000131">
    <property type="entry name" value="ATP_synth_F1_gsu"/>
</dbReference>
<dbReference type="InterPro" id="IPR023632">
    <property type="entry name" value="ATP_synth_F1_gsu_CS"/>
</dbReference>
<dbReference type="NCBIfam" id="TIGR01146">
    <property type="entry name" value="ATPsyn_F1gamma"/>
    <property type="match status" value="1"/>
</dbReference>
<dbReference type="NCBIfam" id="NF004145">
    <property type="entry name" value="PRK05621.1-2"/>
    <property type="match status" value="1"/>
</dbReference>
<dbReference type="PANTHER" id="PTHR11693">
    <property type="entry name" value="ATP SYNTHASE GAMMA CHAIN"/>
    <property type="match status" value="1"/>
</dbReference>
<dbReference type="PANTHER" id="PTHR11693:SF41">
    <property type="entry name" value="ATP SYNTHASE GAMMA CHAIN, CHLOROPLASTIC"/>
    <property type="match status" value="1"/>
</dbReference>
<dbReference type="Pfam" id="PF00231">
    <property type="entry name" value="ATP-synt"/>
    <property type="match status" value="1"/>
</dbReference>
<dbReference type="PRINTS" id="PR00126">
    <property type="entry name" value="ATPASEGAMMA"/>
</dbReference>
<dbReference type="SUPFAM" id="SSF52943">
    <property type="entry name" value="ATP synthase (F1-ATPase), gamma subunit"/>
    <property type="match status" value="1"/>
</dbReference>
<dbReference type="PROSITE" id="PS00153">
    <property type="entry name" value="ATPASE_GAMMA"/>
    <property type="match status" value="1"/>
</dbReference>
<gene>
    <name evidence="1" type="primary">atpG</name>
    <name evidence="1" type="synonym">atpC</name>
    <name type="ordered locus">glr4315</name>
</gene>
<name>ATPG_GLOVI</name>
<accession>Q7NDC0</accession>
<reference key="1">
    <citation type="journal article" date="2003" name="DNA Res.">
        <title>Complete genome structure of Gloeobacter violaceus PCC 7421, a cyanobacterium that lacks thylakoids.</title>
        <authorList>
            <person name="Nakamura Y."/>
            <person name="Kaneko T."/>
            <person name="Sato S."/>
            <person name="Mimuro M."/>
            <person name="Miyashita H."/>
            <person name="Tsuchiya T."/>
            <person name="Sasamoto S."/>
            <person name="Watanabe A."/>
            <person name="Kawashima K."/>
            <person name="Kishida Y."/>
            <person name="Kiyokawa C."/>
            <person name="Kohara M."/>
            <person name="Matsumoto M."/>
            <person name="Matsuno A."/>
            <person name="Nakazaki N."/>
            <person name="Shimpo S."/>
            <person name="Takeuchi C."/>
            <person name="Yamada M."/>
            <person name="Tabata S."/>
        </authorList>
    </citation>
    <scope>NUCLEOTIDE SEQUENCE [LARGE SCALE GENOMIC DNA]</scope>
    <source>
        <strain>ATCC 29082 / PCC 7421</strain>
    </source>
</reference>